<name>DXR_THEVB</name>
<comment type="function">
    <text evidence="1">Catalyzes the NADPH-dependent rearrangement and reduction of 1-deoxy-D-xylulose-5-phosphate (DXP) to 2-C-methyl-D-erythritol 4-phosphate (MEP).</text>
</comment>
<comment type="catalytic activity">
    <reaction evidence="1">
        <text>2-C-methyl-D-erythritol 4-phosphate + NADP(+) = 1-deoxy-D-xylulose 5-phosphate + NADPH + H(+)</text>
        <dbReference type="Rhea" id="RHEA:13717"/>
        <dbReference type="ChEBI" id="CHEBI:15378"/>
        <dbReference type="ChEBI" id="CHEBI:57783"/>
        <dbReference type="ChEBI" id="CHEBI:57792"/>
        <dbReference type="ChEBI" id="CHEBI:58262"/>
        <dbReference type="ChEBI" id="CHEBI:58349"/>
        <dbReference type="EC" id="1.1.1.267"/>
    </reaction>
    <physiologicalReaction direction="right-to-left" evidence="1">
        <dbReference type="Rhea" id="RHEA:13719"/>
    </physiologicalReaction>
</comment>
<comment type="cofactor">
    <cofactor evidence="1">
        <name>Mg(2+)</name>
        <dbReference type="ChEBI" id="CHEBI:18420"/>
    </cofactor>
    <cofactor evidence="1">
        <name>Mn(2+)</name>
        <dbReference type="ChEBI" id="CHEBI:29035"/>
    </cofactor>
</comment>
<comment type="pathway">
    <text evidence="1">Isoprenoid biosynthesis; isopentenyl diphosphate biosynthesis via DXP pathway; isopentenyl diphosphate from 1-deoxy-D-xylulose 5-phosphate: step 1/6.</text>
</comment>
<comment type="similarity">
    <text evidence="1">Belongs to the DXR family.</text>
</comment>
<organism>
    <name type="scientific">Thermosynechococcus vestitus (strain NIES-2133 / IAM M-273 / BP-1)</name>
    <dbReference type="NCBI Taxonomy" id="197221"/>
    <lineage>
        <taxon>Bacteria</taxon>
        <taxon>Bacillati</taxon>
        <taxon>Cyanobacteriota</taxon>
        <taxon>Cyanophyceae</taxon>
        <taxon>Acaryochloridales</taxon>
        <taxon>Thermosynechococcaceae</taxon>
        <taxon>Thermosynechococcus</taxon>
    </lineage>
</organism>
<gene>
    <name evidence="1" type="primary">dxr</name>
    <name type="ordered locus">tlr1040</name>
</gene>
<sequence length="413" mass="44148">MSPPAVDIKVSTDAPPKIVKALNLLGSTGSIGTQTLDIVAQYPDRFRVVGLAAGRNLERLIPQIRQFQPEIVSIADPEQLPELEAALADLPQKPQLVAGEAGIAAVAAYGDAEVVVTGIVGCAGLVPTIAAIKAGKDIALANKETLIAGGPVVLPLLQEYGVKLLPADSEHSAIFQCLQGVPEGGLRKIILTASGGAFRDWPVEKLAQVTVADALKHPNWSMGPKITVDSATLMNKGLEVIEAHYLFGMDYDNIEIVIHPQSIIHSLIELQDTSVLAQLGWPDMRLPLLYALSWPERIPTNWSPLDLVKAGDLTFRSPDHQKYPCMGLAYAAGRAGGAMPAVLNAANEQAVALFIAEAIAFLEIPRLIEMVCDRYSAQNIPNPTLEDILAADRWARATVQELAQRGVSPMVAL</sequence>
<accession>Q8DK30</accession>
<keyword id="KW-0414">Isoprene biosynthesis</keyword>
<keyword id="KW-0464">Manganese</keyword>
<keyword id="KW-0479">Metal-binding</keyword>
<keyword id="KW-0521">NADP</keyword>
<keyword id="KW-0560">Oxidoreductase</keyword>
<keyword id="KW-1185">Reference proteome</keyword>
<reference key="1">
    <citation type="journal article" date="2002" name="DNA Res.">
        <title>Complete genome structure of the thermophilic cyanobacterium Thermosynechococcus elongatus BP-1.</title>
        <authorList>
            <person name="Nakamura Y."/>
            <person name="Kaneko T."/>
            <person name="Sato S."/>
            <person name="Ikeuchi M."/>
            <person name="Katoh H."/>
            <person name="Sasamoto S."/>
            <person name="Watanabe A."/>
            <person name="Iriguchi M."/>
            <person name="Kawashima K."/>
            <person name="Kimura T."/>
            <person name="Kishida Y."/>
            <person name="Kiyokawa C."/>
            <person name="Kohara M."/>
            <person name="Matsumoto M."/>
            <person name="Matsuno A."/>
            <person name="Nakazaki N."/>
            <person name="Shimpo S."/>
            <person name="Sugimoto M."/>
            <person name="Takeuchi C."/>
            <person name="Yamada M."/>
            <person name="Tabata S."/>
        </authorList>
    </citation>
    <scope>NUCLEOTIDE SEQUENCE [LARGE SCALE GENOMIC DNA]</scope>
    <source>
        <strain>NIES-2133 / IAM M-273 / BP-1</strain>
    </source>
</reference>
<evidence type="ECO:0000255" key="1">
    <source>
        <dbReference type="HAMAP-Rule" id="MF_00183"/>
    </source>
</evidence>
<dbReference type="EC" id="1.1.1.267" evidence="1"/>
<dbReference type="EMBL" id="BA000039">
    <property type="protein sequence ID" value="BAC08593.1"/>
    <property type="molecule type" value="Genomic_DNA"/>
</dbReference>
<dbReference type="RefSeq" id="NP_681831.1">
    <property type="nucleotide sequence ID" value="NC_004113.1"/>
</dbReference>
<dbReference type="SMR" id="Q8DK30"/>
<dbReference type="STRING" id="197221.gene:10747633"/>
<dbReference type="EnsemblBacteria" id="BAC08593">
    <property type="protein sequence ID" value="BAC08593"/>
    <property type="gene ID" value="BAC08593"/>
</dbReference>
<dbReference type="KEGG" id="tel:tlr1040"/>
<dbReference type="PATRIC" id="fig|197221.4.peg.1092"/>
<dbReference type="eggNOG" id="COG0743">
    <property type="taxonomic scope" value="Bacteria"/>
</dbReference>
<dbReference type="UniPathway" id="UPA00056">
    <property type="reaction ID" value="UER00092"/>
</dbReference>
<dbReference type="Proteomes" id="UP000000440">
    <property type="component" value="Chromosome"/>
</dbReference>
<dbReference type="GO" id="GO:0030604">
    <property type="term" value="F:1-deoxy-D-xylulose-5-phosphate reductoisomerase activity"/>
    <property type="evidence" value="ECO:0007669"/>
    <property type="project" value="UniProtKB-UniRule"/>
</dbReference>
<dbReference type="GO" id="GO:0030145">
    <property type="term" value="F:manganese ion binding"/>
    <property type="evidence" value="ECO:0007669"/>
    <property type="project" value="TreeGrafter"/>
</dbReference>
<dbReference type="GO" id="GO:0070402">
    <property type="term" value="F:NADPH binding"/>
    <property type="evidence" value="ECO:0007669"/>
    <property type="project" value="InterPro"/>
</dbReference>
<dbReference type="GO" id="GO:0051484">
    <property type="term" value="P:isopentenyl diphosphate biosynthetic process, methylerythritol 4-phosphate pathway involved in terpenoid biosynthetic process"/>
    <property type="evidence" value="ECO:0007669"/>
    <property type="project" value="TreeGrafter"/>
</dbReference>
<dbReference type="FunFam" id="3.40.50.720:FF:000183">
    <property type="entry name" value="1-deoxy-D-xylulose 5-phosphate reductoisomerase, chloroplastic"/>
    <property type="match status" value="1"/>
</dbReference>
<dbReference type="Gene3D" id="1.10.1740.10">
    <property type="match status" value="1"/>
</dbReference>
<dbReference type="Gene3D" id="3.40.50.720">
    <property type="entry name" value="NAD(P)-binding Rossmann-like Domain"/>
    <property type="match status" value="1"/>
</dbReference>
<dbReference type="HAMAP" id="MF_00183">
    <property type="entry name" value="DXP_reductoisom"/>
    <property type="match status" value="1"/>
</dbReference>
<dbReference type="InterPro" id="IPR003821">
    <property type="entry name" value="DXP_reductoisomerase"/>
</dbReference>
<dbReference type="InterPro" id="IPR013644">
    <property type="entry name" value="DXP_reductoisomerase_C"/>
</dbReference>
<dbReference type="InterPro" id="IPR013512">
    <property type="entry name" value="DXP_reductoisomerase_N"/>
</dbReference>
<dbReference type="InterPro" id="IPR026877">
    <property type="entry name" value="DXPR_C"/>
</dbReference>
<dbReference type="InterPro" id="IPR036169">
    <property type="entry name" value="DXPR_C_sf"/>
</dbReference>
<dbReference type="InterPro" id="IPR036291">
    <property type="entry name" value="NAD(P)-bd_dom_sf"/>
</dbReference>
<dbReference type="NCBIfam" id="TIGR00243">
    <property type="entry name" value="Dxr"/>
    <property type="match status" value="1"/>
</dbReference>
<dbReference type="NCBIfam" id="NF009114">
    <property type="entry name" value="PRK12464.1"/>
    <property type="match status" value="1"/>
</dbReference>
<dbReference type="PANTHER" id="PTHR30525">
    <property type="entry name" value="1-DEOXY-D-XYLULOSE 5-PHOSPHATE REDUCTOISOMERASE"/>
    <property type="match status" value="1"/>
</dbReference>
<dbReference type="PANTHER" id="PTHR30525:SF0">
    <property type="entry name" value="1-DEOXY-D-XYLULOSE 5-PHOSPHATE REDUCTOISOMERASE, CHLOROPLASTIC"/>
    <property type="match status" value="1"/>
</dbReference>
<dbReference type="Pfam" id="PF08436">
    <property type="entry name" value="DXP_redisom_C"/>
    <property type="match status" value="1"/>
</dbReference>
<dbReference type="Pfam" id="PF02670">
    <property type="entry name" value="DXP_reductoisom"/>
    <property type="match status" value="1"/>
</dbReference>
<dbReference type="Pfam" id="PF13288">
    <property type="entry name" value="DXPR_C"/>
    <property type="match status" value="1"/>
</dbReference>
<dbReference type="PIRSF" id="PIRSF006205">
    <property type="entry name" value="Dxp_reductismrs"/>
    <property type="match status" value="1"/>
</dbReference>
<dbReference type="SUPFAM" id="SSF69055">
    <property type="entry name" value="1-deoxy-D-xylulose-5-phosphate reductoisomerase, C-terminal domain"/>
    <property type="match status" value="1"/>
</dbReference>
<dbReference type="SUPFAM" id="SSF55347">
    <property type="entry name" value="Glyceraldehyde-3-phosphate dehydrogenase-like, C-terminal domain"/>
    <property type="match status" value="1"/>
</dbReference>
<dbReference type="SUPFAM" id="SSF51735">
    <property type="entry name" value="NAD(P)-binding Rossmann-fold domains"/>
    <property type="match status" value="1"/>
</dbReference>
<proteinExistence type="inferred from homology"/>
<feature type="chain" id="PRO_0000163717" description="1-deoxy-D-xylulose 5-phosphate reductoisomerase">
    <location>
        <begin position="1"/>
        <end position="413"/>
    </location>
</feature>
<feature type="binding site" evidence="1">
    <location>
        <position position="28"/>
    </location>
    <ligand>
        <name>NADPH</name>
        <dbReference type="ChEBI" id="CHEBI:57783"/>
    </ligand>
</feature>
<feature type="binding site" evidence="1">
    <location>
        <position position="29"/>
    </location>
    <ligand>
        <name>NADPH</name>
        <dbReference type="ChEBI" id="CHEBI:57783"/>
    </ligand>
</feature>
<feature type="binding site" evidence="1">
    <location>
        <position position="30"/>
    </location>
    <ligand>
        <name>NADPH</name>
        <dbReference type="ChEBI" id="CHEBI:57783"/>
    </ligand>
</feature>
<feature type="binding site" evidence="1">
    <location>
        <position position="31"/>
    </location>
    <ligand>
        <name>NADPH</name>
        <dbReference type="ChEBI" id="CHEBI:57783"/>
    </ligand>
</feature>
<feature type="binding site" evidence="1">
    <location>
        <position position="54"/>
    </location>
    <ligand>
        <name>NADPH</name>
        <dbReference type="ChEBI" id="CHEBI:57783"/>
    </ligand>
</feature>
<feature type="binding site" evidence="1">
    <location>
        <position position="55"/>
    </location>
    <ligand>
        <name>NADPH</name>
        <dbReference type="ChEBI" id="CHEBI:57783"/>
    </ligand>
</feature>
<feature type="binding site" evidence="1">
    <location>
        <position position="56"/>
    </location>
    <ligand>
        <name>NADPH</name>
        <dbReference type="ChEBI" id="CHEBI:57783"/>
    </ligand>
</feature>
<feature type="binding site" evidence="1">
    <location>
        <position position="142"/>
    </location>
    <ligand>
        <name>NADPH</name>
        <dbReference type="ChEBI" id="CHEBI:57783"/>
    </ligand>
</feature>
<feature type="binding site" evidence="1">
    <location>
        <position position="143"/>
    </location>
    <ligand>
        <name>1-deoxy-D-xylulose 5-phosphate</name>
        <dbReference type="ChEBI" id="CHEBI:57792"/>
    </ligand>
</feature>
<feature type="binding site" evidence="1">
    <location>
        <position position="144"/>
    </location>
    <ligand>
        <name>NADPH</name>
        <dbReference type="ChEBI" id="CHEBI:57783"/>
    </ligand>
</feature>
<feature type="binding site" evidence="1">
    <location>
        <position position="168"/>
    </location>
    <ligand>
        <name>Mn(2+)</name>
        <dbReference type="ChEBI" id="CHEBI:29035"/>
    </ligand>
</feature>
<feature type="binding site" evidence="1">
    <location>
        <position position="169"/>
    </location>
    <ligand>
        <name>1-deoxy-D-xylulose 5-phosphate</name>
        <dbReference type="ChEBI" id="CHEBI:57792"/>
    </ligand>
</feature>
<feature type="binding site" evidence="1">
    <location>
        <position position="170"/>
    </location>
    <ligand>
        <name>1-deoxy-D-xylulose 5-phosphate</name>
        <dbReference type="ChEBI" id="CHEBI:57792"/>
    </ligand>
</feature>
<feature type="binding site" evidence="1">
    <location>
        <position position="170"/>
    </location>
    <ligand>
        <name>Mn(2+)</name>
        <dbReference type="ChEBI" id="CHEBI:29035"/>
    </ligand>
</feature>
<feature type="binding site" evidence="1">
    <location>
        <position position="194"/>
    </location>
    <ligand>
        <name>1-deoxy-D-xylulose 5-phosphate</name>
        <dbReference type="ChEBI" id="CHEBI:57792"/>
    </ligand>
</feature>
<feature type="binding site" evidence="1">
    <location>
        <position position="217"/>
    </location>
    <ligand>
        <name>1-deoxy-D-xylulose 5-phosphate</name>
        <dbReference type="ChEBI" id="CHEBI:57792"/>
    </ligand>
</feature>
<feature type="binding site" evidence="1">
    <location>
        <position position="223"/>
    </location>
    <ligand>
        <name>NADPH</name>
        <dbReference type="ChEBI" id="CHEBI:57783"/>
    </ligand>
</feature>
<feature type="binding site" evidence="1">
    <location>
        <position position="230"/>
    </location>
    <ligand>
        <name>1-deoxy-D-xylulose 5-phosphate</name>
        <dbReference type="ChEBI" id="CHEBI:57792"/>
    </ligand>
</feature>
<feature type="binding site" evidence="1">
    <location>
        <position position="235"/>
    </location>
    <ligand>
        <name>1-deoxy-D-xylulose 5-phosphate</name>
        <dbReference type="ChEBI" id="CHEBI:57792"/>
    </ligand>
</feature>
<feature type="binding site" evidence="1">
    <location>
        <position position="236"/>
    </location>
    <ligand>
        <name>1-deoxy-D-xylulose 5-phosphate</name>
        <dbReference type="ChEBI" id="CHEBI:57792"/>
    </ligand>
</feature>
<feature type="binding site" evidence="1">
    <location>
        <position position="239"/>
    </location>
    <ligand>
        <name>1-deoxy-D-xylulose 5-phosphate</name>
        <dbReference type="ChEBI" id="CHEBI:57792"/>
    </ligand>
</feature>
<feature type="binding site" evidence="1">
    <location>
        <position position="239"/>
    </location>
    <ligand>
        <name>Mn(2+)</name>
        <dbReference type="ChEBI" id="CHEBI:29035"/>
    </ligand>
</feature>
<protein>
    <recommendedName>
        <fullName evidence="1">1-deoxy-D-xylulose 5-phosphate reductoisomerase</fullName>
        <shortName evidence="1">DXP reductoisomerase</shortName>
        <ecNumber evidence="1">1.1.1.267</ecNumber>
    </recommendedName>
    <alternativeName>
        <fullName evidence="1">1-deoxyxylulose-5-phosphate reductoisomerase</fullName>
    </alternativeName>
    <alternativeName>
        <fullName evidence="1">2-C-methyl-D-erythritol 4-phosphate synthase</fullName>
    </alternativeName>
</protein>